<protein>
    <recommendedName>
        <fullName>Probable Golgi SNAP receptor complex member 2</fullName>
    </recommendedName>
</protein>
<keyword id="KW-0175">Coiled coil</keyword>
<keyword id="KW-0256">Endoplasmic reticulum</keyword>
<keyword id="KW-0333">Golgi apparatus</keyword>
<keyword id="KW-0472">Membrane</keyword>
<keyword id="KW-0653">Protein transport</keyword>
<keyword id="KW-1185">Reference proteome</keyword>
<keyword id="KW-0812">Transmembrane</keyword>
<keyword id="KW-1133">Transmembrane helix</keyword>
<keyword id="KW-0813">Transport</keyword>
<name>GOSR2_DROME</name>
<evidence type="ECO:0000250" key="1">
    <source>
        <dbReference type="UniProtKB" id="O35165"/>
    </source>
</evidence>
<evidence type="ECO:0000255" key="2"/>
<evidence type="ECO:0000305" key="3"/>
<evidence type="ECO:0000312" key="4">
    <source>
        <dbReference type="FlyBase" id="FBgn0260856"/>
    </source>
</evidence>
<comment type="function">
    <text evidence="1">Involved in transport of proteins from the cis/medial-Golgi to the trans-Golgi network.</text>
</comment>
<comment type="subunit">
    <text evidence="1">Part of a unique SNARE complex.</text>
</comment>
<comment type="subcellular location">
    <subcellularLocation>
        <location evidence="1">Golgi apparatus</location>
        <location evidence="1">cis-Golgi network membrane</location>
        <topology evidence="2">Single-pass type IV membrane protein</topology>
    </subcellularLocation>
    <subcellularLocation>
        <location evidence="1">Golgi apparatus membrane</location>
    </subcellularLocation>
    <subcellularLocation>
        <location evidence="1">Endoplasmic reticulum membrane</location>
    </subcellularLocation>
    <text evidence="1">Concentrated most in the intermediate compartment/cis-Golgi network and the cis-Golgi cisternae 1 and 2. Greatly reduced in concentration at the trans end of the Golgi apparatus.</text>
</comment>
<comment type="similarity">
    <text evidence="3">Belongs to the GOSR2 family.</text>
</comment>
<proteinExistence type="evidence at transcript level"/>
<reference key="1">
    <citation type="journal article" date="2000" name="Science">
        <title>The genome sequence of Drosophila melanogaster.</title>
        <authorList>
            <person name="Adams M.D."/>
            <person name="Celniker S.E."/>
            <person name="Holt R.A."/>
            <person name="Evans C.A."/>
            <person name="Gocayne J.D."/>
            <person name="Amanatides P.G."/>
            <person name="Scherer S.E."/>
            <person name="Li P.W."/>
            <person name="Hoskins R.A."/>
            <person name="Galle R.F."/>
            <person name="George R.A."/>
            <person name="Lewis S.E."/>
            <person name="Richards S."/>
            <person name="Ashburner M."/>
            <person name="Henderson S.N."/>
            <person name="Sutton G.G."/>
            <person name="Wortman J.R."/>
            <person name="Yandell M.D."/>
            <person name="Zhang Q."/>
            <person name="Chen L.X."/>
            <person name="Brandon R.C."/>
            <person name="Rogers Y.-H.C."/>
            <person name="Blazej R.G."/>
            <person name="Champe M."/>
            <person name="Pfeiffer B.D."/>
            <person name="Wan K.H."/>
            <person name="Doyle C."/>
            <person name="Baxter E.G."/>
            <person name="Helt G."/>
            <person name="Nelson C.R."/>
            <person name="Miklos G.L.G."/>
            <person name="Abril J.F."/>
            <person name="Agbayani A."/>
            <person name="An H.-J."/>
            <person name="Andrews-Pfannkoch C."/>
            <person name="Baldwin D."/>
            <person name="Ballew R.M."/>
            <person name="Basu A."/>
            <person name="Baxendale J."/>
            <person name="Bayraktaroglu L."/>
            <person name="Beasley E.M."/>
            <person name="Beeson K.Y."/>
            <person name="Benos P.V."/>
            <person name="Berman B.P."/>
            <person name="Bhandari D."/>
            <person name="Bolshakov S."/>
            <person name="Borkova D."/>
            <person name="Botchan M.R."/>
            <person name="Bouck J."/>
            <person name="Brokstein P."/>
            <person name="Brottier P."/>
            <person name="Burtis K.C."/>
            <person name="Busam D.A."/>
            <person name="Butler H."/>
            <person name="Cadieu E."/>
            <person name="Center A."/>
            <person name="Chandra I."/>
            <person name="Cherry J.M."/>
            <person name="Cawley S."/>
            <person name="Dahlke C."/>
            <person name="Davenport L.B."/>
            <person name="Davies P."/>
            <person name="de Pablos B."/>
            <person name="Delcher A."/>
            <person name="Deng Z."/>
            <person name="Mays A.D."/>
            <person name="Dew I."/>
            <person name="Dietz S.M."/>
            <person name="Dodson K."/>
            <person name="Doup L.E."/>
            <person name="Downes M."/>
            <person name="Dugan-Rocha S."/>
            <person name="Dunkov B.C."/>
            <person name="Dunn P."/>
            <person name="Durbin K.J."/>
            <person name="Evangelista C.C."/>
            <person name="Ferraz C."/>
            <person name="Ferriera S."/>
            <person name="Fleischmann W."/>
            <person name="Fosler C."/>
            <person name="Gabrielian A.E."/>
            <person name="Garg N.S."/>
            <person name="Gelbart W.M."/>
            <person name="Glasser K."/>
            <person name="Glodek A."/>
            <person name="Gong F."/>
            <person name="Gorrell J.H."/>
            <person name="Gu Z."/>
            <person name="Guan P."/>
            <person name="Harris M."/>
            <person name="Harris N.L."/>
            <person name="Harvey D.A."/>
            <person name="Heiman T.J."/>
            <person name="Hernandez J.R."/>
            <person name="Houck J."/>
            <person name="Hostin D."/>
            <person name="Houston K.A."/>
            <person name="Howland T.J."/>
            <person name="Wei M.-H."/>
            <person name="Ibegwam C."/>
            <person name="Jalali M."/>
            <person name="Kalush F."/>
            <person name="Karpen G.H."/>
            <person name="Ke Z."/>
            <person name="Kennison J.A."/>
            <person name="Ketchum K.A."/>
            <person name="Kimmel B.E."/>
            <person name="Kodira C.D."/>
            <person name="Kraft C.L."/>
            <person name="Kravitz S."/>
            <person name="Kulp D."/>
            <person name="Lai Z."/>
            <person name="Lasko P."/>
            <person name="Lei Y."/>
            <person name="Levitsky A.A."/>
            <person name="Li J.H."/>
            <person name="Li Z."/>
            <person name="Liang Y."/>
            <person name="Lin X."/>
            <person name="Liu X."/>
            <person name="Mattei B."/>
            <person name="McIntosh T.C."/>
            <person name="McLeod M.P."/>
            <person name="McPherson D."/>
            <person name="Merkulov G."/>
            <person name="Milshina N.V."/>
            <person name="Mobarry C."/>
            <person name="Morris J."/>
            <person name="Moshrefi A."/>
            <person name="Mount S.M."/>
            <person name="Moy M."/>
            <person name="Murphy B."/>
            <person name="Murphy L."/>
            <person name="Muzny D.M."/>
            <person name="Nelson D.L."/>
            <person name="Nelson D.R."/>
            <person name="Nelson K.A."/>
            <person name="Nixon K."/>
            <person name="Nusskern D.R."/>
            <person name="Pacleb J.M."/>
            <person name="Palazzolo M."/>
            <person name="Pittman G.S."/>
            <person name="Pan S."/>
            <person name="Pollard J."/>
            <person name="Puri V."/>
            <person name="Reese M.G."/>
            <person name="Reinert K."/>
            <person name="Remington K."/>
            <person name="Saunders R.D.C."/>
            <person name="Scheeler F."/>
            <person name="Shen H."/>
            <person name="Shue B.C."/>
            <person name="Siden-Kiamos I."/>
            <person name="Simpson M."/>
            <person name="Skupski M.P."/>
            <person name="Smith T.J."/>
            <person name="Spier E."/>
            <person name="Spradling A.C."/>
            <person name="Stapleton M."/>
            <person name="Strong R."/>
            <person name="Sun E."/>
            <person name="Svirskas R."/>
            <person name="Tector C."/>
            <person name="Turner R."/>
            <person name="Venter E."/>
            <person name="Wang A.H."/>
            <person name="Wang X."/>
            <person name="Wang Z.-Y."/>
            <person name="Wassarman D.A."/>
            <person name="Weinstock G.M."/>
            <person name="Weissenbach J."/>
            <person name="Williams S.M."/>
            <person name="Woodage T."/>
            <person name="Worley K.C."/>
            <person name="Wu D."/>
            <person name="Yang S."/>
            <person name="Yao Q.A."/>
            <person name="Ye J."/>
            <person name="Yeh R.-F."/>
            <person name="Zaveri J.S."/>
            <person name="Zhan M."/>
            <person name="Zhang G."/>
            <person name="Zhao Q."/>
            <person name="Zheng L."/>
            <person name="Zheng X.H."/>
            <person name="Zhong F.N."/>
            <person name="Zhong W."/>
            <person name="Zhou X."/>
            <person name="Zhu S.C."/>
            <person name="Zhu X."/>
            <person name="Smith H.O."/>
            <person name="Gibbs R.A."/>
            <person name="Myers E.W."/>
            <person name="Rubin G.M."/>
            <person name="Venter J.C."/>
        </authorList>
    </citation>
    <scope>NUCLEOTIDE SEQUENCE [LARGE SCALE GENOMIC DNA]</scope>
    <source>
        <strain>Berkeley</strain>
    </source>
</reference>
<reference key="2">
    <citation type="journal article" date="2002" name="Genome Biol.">
        <title>Annotation of the Drosophila melanogaster euchromatic genome: a systematic review.</title>
        <authorList>
            <person name="Misra S."/>
            <person name="Crosby M.A."/>
            <person name="Mungall C.J."/>
            <person name="Matthews B.B."/>
            <person name="Campbell K.S."/>
            <person name="Hradecky P."/>
            <person name="Huang Y."/>
            <person name="Kaminker J.S."/>
            <person name="Millburn G.H."/>
            <person name="Prochnik S.E."/>
            <person name="Smith C.D."/>
            <person name="Tupy J.L."/>
            <person name="Whitfield E.J."/>
            <person name="Bayraktaroglu L."/>
            <person name="Berman B.P."/>
            <person name="Bettencourt B.R."/>
            <person name="Celniker S.E."/>
            <person name="de Grey A.D.N.J."/>
            <person name="Drysdale R.A."/>
            <person name="Harris N.L."/>
            <person name="Richter J."/>
            <person name="Russo S."/>
            <person name="Schroeder A.J."/>
            <person name="Shu S.Q."/>
            <person name="Stapleton M."/>
            <person name="Yamada C."/>
            <person name="Ashburner M."/>
            <person name="Gelbart W.M."/>
            <person name="Rubin G.M."/>
            <person name="Lewis S.E."/>
        </authorList>
    </citation>
    <scope>GENOME REANNOTATION</scope>
    <source>
        <strain>Berkeley</strain>
    </source>
</reference>
<reference key="3">
    <citation type="journal article" date="2002" name="Genome Biol.">
        <title>A Drosophila full-length cDNA resource.</title>
        <authorList>
            <person name="Stapleton M."/>
            <person name="Carlson J.W."/>
            <person name="Brokstein P."/>
            <person name="Yu C."/>
            <person name="Champe M."/>
            <person name="George R.A."/>
            <person name="Guarin H."/>
            <person name="Kronmiller B."/>
            <person name="Pacleb J.M."/>
            <person name="Park S."/>
            <person name="Wan K.H."/>
            <person name="Rubin G.M."/>
            <person name="Celniker S.E."/>
        </authorList>
    </citation>
    <scope>NUCLEOTIDE SEQUENCE [LARGE SCALE MRNA]</scope>
    <source>
        <strain>Berkeley</strain>
        <tissue>Embryo</tissue>
    </source>
</reference>
<reference key="4">
    <citation type="submission" date="2008-09" db="EMBL/GenBank/DDBJ databases">
        <authorList>
            <person name="Carlson J.W."/>
            <person name="Booth B."/>
            <person name="Frise E."/>
            <person name="Park S."/>
            <person name="Wan K.H."/>
            <person name="Yu C."/>
            <person name="Celniker S.E."/>
        </authorList>
    </citation>
    <scope>NUCLEOTIDE SEQUENCE [LARGE SCALE MRNA]</scope>
    <source>
        <strain>Berkeley</strain>
    </source>
</reference>
<reference key="5">
    <citation type="journal article" date="2000" name="J. Cell Biol.">
        <title>A genomic analysis of membrane trafficking and neurotransmitter release in Drosophila.</title>
        <authorList>
            <person name="Littleton J.T."/>
        </authorList>
    </citation>
    <scope>IDENTIFICATION</scope>
</reference>
<gene>
    <name evidence="4" type="primary">Membrin</name>
    <name evidence="4" type="ORF">CG4780</name>
</gene>
<dbReference type="EMBL" id="AE014296">
    <property type="protein sequence ID" value="AAF50783.1"/>
    <property type="molecule type" value="Genomic_DNA"/>
</dbReference>
<dbReference type="EMBL" id="AY119259">
    <property type="protein sequence ID" value="AAM51119.1"/>
    <property type="molecule type" value="mRNA"/>
</dbReference>
<dbReference type="EMBL" id="BT044445">
    <property type="protein sequence ID" value="ACH92510.1"/>
    <property type="molecule type" value="mRNA"/>
</dbReference>
<dbReference type="RefSeq" id="NP_647960.1">
    <property type="nucleotide sequence ID" value="NM_139703.4"/>
</dbReference>
<dbReference type="SMR" id="Q9VRL2"/>
<dbReference type="BioGRID" id="64080">
    <property type="interactions" value="41"/>
</dbReference>
<dbReference type="DIP" id="DIP-21257N"/>
<dbReference type="FunCoup" id="Q9VRL2">
    <property type="interactions" value="2393"/>
</dbReference>
<dbReference type="IntAct" id="Q9VRL2">
    <property type="interactions" value="35"/>
</dbReference>
<dbReference type="STRING" id="7227.FBpp0076849"/>
<dbReference type="PaxDb" id="7227-FBpp0076849"/>
<dbReference type="DNASU" id="38614"/>
<dbReference type="EnsemblMetazoa" id="FBtr0077145">
    <property type="protein sequence ID" value="FBpp0076849"/>
    <property type="gene ID" value="FBgn0260856"/>
</dbReference>
<dbReference type="GeneID" id="38614"/>
<dbReference type="KEGG" id="dme:Dmel_CG4780"/>
<dbReference type="UCSC" id="CG4780-RA">
    <property type="organism name" value="d. melanogaster"/>
</dbReference>
<dbReference type="AGR" id="FB:FBgn0260856"/>
<dbReference type="CTD" id="38614"/>
<dbReference type="FlyBase" id="FBgn0260856">
    <property type="gene designation" value="Membrin"/>
</dbReference>
<dbReference type="VEuPathDB" id="VectorBase:FBgn0260856"/>
<dbReference type="eggNOG" id="KOG3251">
    <property type="taxonomic scope" value="Eukaryota"/>
</dbReference>
<dbReference type="GeneTree" id="ENSGT00940000164674"/>
<dbReference type="HOGENOM" id="CLU_083740_0_1_1"/>
<dbReference type="InParanoid" id="Q9VRL2"/>
<dbReference type="OMA" id="LKYDSRH"/>
<dbReference type="OrthoDB" id="158360at2759"/>
<dbReference type="PhylomeDB" id="Q9VRL2"/>
<dbReference type="Reactome" id="R-DME-204005">
    <property type="pathway name" value="COPII-mediated vesicle transport"/>
</dbReference>
<dbReference type="Reactome" id="R-DME-5694530">
    <property type="pathway name" value="Cargo concentration in the ER"/>
</dbReference>
<dbReference type="Reactome" id="R-DME-6807878">
    <property type="pathway name" value="COPI-mediated anterograde transport"/>
</dbReference>
<dbReference type="Reactome" id="R-DME-6811438">
    <property type="pathway name" value="Intra-Golgi traffic"/>
</dbReference>
<dbReference type="BioGRID-ORCS" id="38614">
    <property type="hits" value="0 hits in 1 CRISPR screen"/>
</dbReference>
<dbReference type="GenomeRNAi" id="38614"/>
<dbReference type="PRO" id="PR:Q9VRL2"/>
<dbReference type="Proteomes" id="UP000000803">
    <property type="component" value="Chromosome 3L"/>
</dbReference>
<dbReference type="Bgee" id="FBgn0260856">
    <property type="expression patterns" value="Expressed in saliva-secreting gland and 81 other cell types or tissues"/>
</dbReference>
<dbReference type="GO" id="GO:0005789">
    <property type="term" value="C:endoplasmic reticulum membrane"/>
    <property type="evidence" value="ECO:0000318"/>
    <property type="project" value="GO_Central"/>
</dbReference>
<dbReference type="GO" id="GO:0012507">
    <property type="term" value="C:ER to Golgi transport vesicle membrane"/>
    <property type="evidence" value="ECO:0000318"/>
    <property type="project" value="GO_Central"/>
</dbReference>
<dbReference type="GO" id="GO:0005794">
    <property type="term" value="C:Golgi apparatus"/>
    <property type="evidence" value="ECO:0000318"/>
    <property type="project" value="GO_Central"/>
</dbReference>
<dbReference type="GO" id="GO:0000139">
    <property type="term" value="C:Golgi membrane"/>
    <property type="evidence" value="ECO:0007669"/>
    <property type="project" value="UniProtKB-SubCell"/>
</dbReference>
<dbReference type="GO" id="GO:0031902">
    <property type="term" value="C:late endosome membrane"/>
    <property type="evidence" value="ECO:0000318"/>
    <property type="project" value="GO_Central"/>
</dbReference>
<dbReference type="GO" id="GO:0031201">
    <property type="term" value="C:SNARE complex"/>
    <property type="evidence" value="ECO:0000250"/>
    <property type="project" value="FlyBase"/>
</dbReference>
<dbReference type="GO" id="GO:0005484">
    <property type="term" value="F:SNAP receptor activity"/>
    <property type="evidence" value="ECO:0000250"/>
    <property type="project" value="FlyBase"/>
</dbReference>
<dbReference type="GO" id="GO:0000149">
    <property type="term" value="F:SNARE binding"/>
    <property type="evidence" value="ECO:0000318"/>
    <property type="project" value="GO_Central"/>
</dbReference>
<dbReference type="GO" id="GO:0035149">
    <property type="term" value="P:lumen formation, open tracheal system"/>
    <property type="evidence" value="ECO:0007001"/>
    <property type="project" value="FlyBase"/>
</dbReference>
<dbReference type="GO" id="GO:0015031">
    <property type="term" value="P:protein transport"/>
    <property type="evidence" value="ECO:0007669"/>
    <property type="project" value="UniProtKB-KW"/>
</dbReference>
<dbReference type="GO" id="GO:0006906">
    <property type="term" value="P:vesicle fusion"/>
    <property type="evidence" value="ECO:0000250"/>
    <property type="project" value="FlyBase"/>
</dbReference>
<dbReference type="GO" id="GO:0016192">
    <property type="term" value="P:vesicle-mediated transport"/>
    <property type="evidence" value="ECO:0000250"/>
    <property type="project" value="FlyBase"/>
</dbReference>
<dbReference type="CDD" id="cd15863">
    <property type="entry name" value="SNARE_GS27"/>
    <property type="match status" value="1"/>
</dbReference>
<dbReference type="Gene3D" id="1.20.5.110">
    <property type="match status" value="1"/>
</dbReference>
<dbReference type="Gene3D" id="1.20.58.400">
    <property type="entry name" value="t-snare proteins"/>
    <property type="match status" value="1"/>
</dbReference>
<dbReference type="InterPro" id="IPR027027">
    <property type="entry name" value="GOSR2/Membrin/Bos1"/>
</dbReference>
<dbReference type="InterPro" id="IPR038407">
    <property type="entry name" value="v-SNARE_N_sf"/>
</dbReference>
<dbReference type="PANTHER" id="PTHR21230:SF1">
    <property type="entry name" value="GOLGI SNAP RECEPTOR COMPLEX MEMBER 2"/>
    <property type="match status" value="1"/>
</dbReference>
<dbReference type="PANTHER" id="PTHR21230">
    <property type="entry name" value="VESICLE TRANSPORT V-SNARE PROTEIN VTI1-RELATED"/>
    <property type="match status" value="1"/>
</dbReference>
<dbReference type="Pfam" id="PF12352">
    <property type="entry name" value="V-SNARE_C"/>
    <property type="match status" value="1"/>
</dbReference>
<dbReference type="PIRSF" id="PIRSF028865">
    <property type="entry name" value="Membrin-2"/>
    <property type="match status" value="1"/>
</dbReference>
<dbReference type="SUPFAM" id="SSF58038">
    <property type="entry name" value="SNARE fusion complex"/>
    <property type="match status" value="1"/>
</dbReference>
<organism>
    <name type="scientific">Drosophila melanogaster</name>
    <name type="common">Fruit fly</name>
    <dbReference type="NCBI Taxonomy" id="7227"/>
    <lineage>
        <taxon>Eukaryota</taxon>
        <taxon>Metazoa</taxon>
        <taxon>Ecdysozoa</taxon>
        <taxon>Arthropoda</taxon>
        <taxon>Hexapoda</taxon>
        <taxon>Insecta</taxon>
        <taxon>Pterygota</taxon>
        <taxon>Neoptera</taxon>
        <taxon>Endopterygota</taxon>
        <taxon>Diptera</taxon>
        <taxon>Brachycera</taxon>
        <taxon>Muscomorpha</taxon>
        <taxon>Ephydroidea</taxon>
        <taxon>Drosophilidae</taxon>
        <taxon>Drosophila</taxon>
        <taxon>Sophophora</taxon>
    </lineage>
</organism>
<accession>Q9VRL2</accession>
<accession>B5RJH1</accession>
<accession>Q8MRU9</accession>
<feature type="chain" id="PRO_0000212553" description="Probable Golgi SNAP receptor complex member 2">
    <location>
        <begin position="1"/>
        <end position="216"/>
    </location>
</feature>
<feature type="topological domain" description="Cytoplasmic" evidence="2">
    <location>
        <begin position="1"/>
        <end position="194"/>
    </location>
</feature>
<feature type="transmembrane region" description="Helical; Anchor for type IV membrane protein" evidence="2">
    <location>
        <begin position="195"/>
        <end position="215"/>
    </location>
</feature>
<feature type="topological domain" description="Vesicular" evidence="2">
    <location>
        <position position="216"/>
    </location>
</feature>
<feature type="coiled-coil region" evidence="2">
    <location>
        <begin position="62"/>
        <end position="103"/>
    </location>
</feature>
<feature type="sequence conflict" description="In Ref. 3; AAM51119." evidence="3" ref="3">
    <original>Y</original>
    <variation>H</variation>
    <location>
        <position position="125"/>
    </location>
</feature>
<sequence>MESLYHQTNNVVKDIERDFQRLSQLSAQESLDVENGIQLKITQANANCDRLDVLLYKVPPSQRQSSKLRVDQLKYDLRHLQTSLQTARERRQRRMQEISEREQLLNHRFTANSAQPEETRLQLDYELQHHTQLGNAHRGVDDMIASGSGILESLISQRMTLGGAHKRIQAIGSTLGLSNHTMKLIERRLVEDRRIFIGGVVVTLLIIALIIYFLVL</sequence>